<proteinExistence type="predicted"/>
<sequence>MPLRLCQGRKDRASDPVRDDGSPPRLFVSQVCRRAPKDPQGFQGHRGGQNVGDCSPIFHQEKKQVMRRFYSLCEWK</sequence>
<reference key="1">
    <citation type="journal article" date="2004" name="Virology">
        <title>Comparative genomic analyses of frog virus 3, type species of the genus Ranavirus (family Iridoviridae).</title>
        <authorList>
            <person name="Tan W.G."/>
            <person name="Barkman T.J."/>
            <person name="Gregory Chinchar V."/>
            <person name="Essani K."/>
        </authorList>
    </citation>
    <scope>NUCLEOTIDE SEQUENCE [LARGE SCALE GENOMIC DNA]</scope>
</reference>
<dbReference type="EMBL" id="AY548484">
    <property type="protein sequence ID" value="AAT09713.1"/>
    <property type="molecule type" value="Genomic_DNA"/>
</dbReference>
<dbReference type="RefSeq" id="YP_031632.1">
    <property type="nucleotide sequence ID" value="NC_005946.1"/>
</dbReference>
<dbReference type="KEGG" id="vg:2947833"/>
<dbReference type="Proteomes" id="UP000008770">
    <property type="component" value="Segment"/>
</dbReference>
<gene>
    <name type="ORF">FV3-054L</name>
</gene>
<name>054L_FRG3G</name>
<accession>Q6GZS2</accession>
<feature type="chain" id="PRO_0000410573" description="Uncharacterized protein 054L">
    <location>
        <begin position="1"/>
        <end position="76"/>
    </location>
</feature>
<feature type="region of interest" description="Disordered" evidence="1">
    <location>
        <begin position="1"/>
        <end position="24"/>
    </location>
</feature>
<feature type="compositionally biased region" description="Basic and acidic residues" evidence="1">
    <location>
        <begin position="8"/>
        <end position="22"/>
    </location>
</feature>
<evidence type="ECO:0000256" key="1">
    <source>
        <dbReference type="SAM" id="MobiDB-lite"/>
    </source>
</evidence>
<organismHost>
    <name type="scientific">Dryophytes versicolor</name>
    <name type="common">chameleon treefrog</name>
    <dbReference type="NCBI Taxonomy" id="30343"/>
</organismHost>
<organismHost>
    <name type="scientific">Lithobates pipiens</name>
    <name type="common">Northern leopard frog</name>
    <name type="synonym">Rana pipiens</name>
    <dbReference type="NCBI Taxonomy" id="8404"/>
</organismHost>
<organismHost>
    <name type="scientific">Lithobates sylvaticus</name>
    <name type="common">Wood frog</name>
    <name type="synonym">Rana sylvatica</name>
    <dbReference type="NCBI Taxonomy" id="45438"/>
</organismHost>
<organismHost>
    <name type="scientific">Notophthalmus viridescens</name>
    <name type="common">Eastern newt</name>
    <name type="synonym">Triturus viridescens</name>
    <dbReference type="NCBI Taxonomy" id="8316"/>
</organismHost>
<protein>
    <recommendedName>
        <fullName>Uncharacterized protein 054L</fullName>
    </recommendedName>
</protein>
<organism>
    <name type="scientific">Frog virus 3 (isolate Goorha)</name>
    <name type="common">FV-3</name>
    <dbReference type="NCBI Taxonomy" id="654924"/>
    <lineage>
        <taxon>Viruses</taxon>
        <taxon>Varidnaviria</taxon>
        <taxon>Bamfordvirae</taxon>
        <taxon>Nucleocytoviricota</taxon>
        <taxon>Megaviricetes</taxon>
        <taxon>Pimascovirales</taxon>
        <taxon>Iridoviridae</taxon>
        <taxon>Alphairidovirinae</taxon>
        <taxon>Ranavirus</taxon>
        <taxon>Frog virus 3</taxon>
    </lineage>
</organism>
<keyword id="KW-1185">Reference proteome</keyword>